<dbReference type="EMBL" id="AK293673">
    <property type="protein sequence ID" value="BAH11565.1"/>
    <property type="molecule type" value="mRNA"/>
</dbReference>
<dbReference type="EMBL" id="AL589765">
    <property type="status" value="NOT_ANNOTATED_CDS"/>
    <property type="molecule type" value="Genomic_DNA"/>
</dbReference>
<dbReference type="EMBL" id="BC157847">
    <property type="protein sequence ID" value="AAI57848.1"/>
    <property type="molecule type" value="mRNA"/>
</dbReference>
<dbReference type="EMBL" id="BC171843">
    <property type="protein sequence ID" value="AAI71843.1"/>
    <property type="molecule type" value="mRNA"/>
</dbReference>
<dbReference type="CCDS" id="CCDS44224.1"/>
<dbReference type="RefSeq" id="NP_001129475.1">
    <property type="nucleotide sequence ID" value="NM_001136003.2"/>
</dbReference>
<dbReference type="RefSeq" id="NP_001381520.1">
    <property type="nucleotide sequence ID" value="NM_001394591.1"/>
</dbReference>
<dbReference type="RefSeq" id="NP_001381521.1">
    <property type="nucleotide sequence ID" value="NM_001394592.1"/>
</dbReference>
<dbReference type="RefSeq" id="NP_001381522.1">
    <property type="nucleotide sequence ID" value="NM_001394593.1"/>
</dbReference>
<dbReference type="RefSeq" id="XP_011507357.1">
    <property type="nucleotide sequence ID" value="XM_011509055.2"/>
</dbReference>
<dbReference type="RefSeq" id="XP_016855478.1">
    <property type="nucleotide sequence ID" value="XM_016999989.1"/>
</dbReference>
<dbReference type="SMR" id="B7Z1M9"/>
<dbReference type="BioGRID" id="937613">
    <property type="interactions" value="2"/>
</dbReference>
<dbReference type="FunCoup" id="B7Z1M9">
    <property type="interactions" value="12"/>
</dbReference>
<dbReference type="STRING" id="9606.ENSP00000389554"/>
<dbReference type="GlyGen" id="B7Z1M9">
    <property type="glycosylation" value="2 sites, 1 O-linked glycan (1 site)"/>
</dbReference>
<dbReference type="iPTMnet" id="B7Z1M9"/>
<dbReference type="PhosphoSitePlus" id="B7Z1M9"/>
<dbReference type="BioMuta" id="C2CD4D"/>
<dbReference type="MassIVE" id="B7Z1M9"/>
<dbReference type="PaxDb" id="9606-ENSP00000389554"/>
<dbReference type="PeptideAtlas" id="B7Z1M9"/>
<dbReference type="ProteomicsDB" id="6351"/>
<dbReference type="Antibodypedia" id="76708">
    <property type="antibodies" value="2 antibodies from 2 providers"/>
</dbReference>
<dbReference type="DNASU" id="100191040"/>
<dbReference type="Ensembl" id="ENST00000454109.1">
    <property type="protein sequence ID" value="ENSP00000389554.1"/>
    <property type="gene ID" value="ENSG00000225556.2"/>
</dbReference>
<dbReference type="Ensembl" id="ENST00000694868.1">
    <property type="protein sequence ID" value="ENSP00000511551.1"/>
    <property type="gene ID" value="ENSG00000225556.2"/>
</dbReference>
<dbReference type="Ensembl" id="ENST00000694869.1">
    <property type="protein sequence ID" value="ENSP00000511552.1"/>
    <property type="gene ID" value="ENSG00000225556.2"/>
</dbReference>
<dbReference type="GeneID" id="100191040"/>
<dbReference type="KEGG" id="hsa:100191040"/>
<dbReference type="MANE-Select" id="ENST00000694868.1">
    <property type="protein sequence ID" value="ENSP00000511551.1"/>
    <property type="RefSeq nucleotide sequence ID" value="NM_001394591.1"/>
    <property type="RefSeq protein sequence ID" value="NP_001381520.1"/>
</dbReference>
<dbReference type="UCSC" id="uc010pdq.2">
    <property type="organism name" value="human"/>
</dbReference>
<dbReference type="AGR" id="HGNC:37210"/>
<dbReference type="CTD" id="100191040"/>
<dbReference type="GeneCards" id="C2CD4D"/>
<dbReference type="HGNC" id="HGNC:37210">
    <property type="gene designation" value="C2CD4D"/>
</dbReference>
<dbReference type="HPA" id="ENSG00000225556">
    <property type="expression patterns" value="Tissue enhanced (brain, salivary gland, skin)"/>
</dbReference>
<dbReference type="neXtProt" id="NX_B7Z1M9"/>
<dbReference type="PharmGKB" id="PA165750504"/>
<dbReference type="VEuPathDB" id="HostDB:ENSG00000225556"/>
<dbReference type="eggNOG" id="KOG4216">
    <property type="taxonomic scope" value="Eukaryota"/>
</dbReference>
<dbReference type="GeneTree" id="ENSGT00940000163537"/>
<dbReference type="HOGENOM" id="CLU_051964_0_0_1"/>
<dbReference type="InParanoid" id="B7Z1M9"/>
<dbReference type="OMA" id="PHCDPRH"/>
<dbReference type="OrthoDB" id="9947256at2759"/>
<dbReference type="PAN-GO" id="B7Z1M9">
    <property type="GO annotations" value="0 GO annotations based on evolutionary models"/>
</dbReference>
<dbReference type="PhylomeDB" id="B7Z1M9"/>
<dbReference type="TreeFam" id="TF330989"/>
<dbReference type="PathwayCommons" id="B7Z1M9"/>
<dbReference type="BioGRID-ORCS" id="100191040">
    <property type="hits" value="26 hits in 1135 CRISPR screens"/>
</dbReference>
<dbReference type="GenomeRNAi" id="100191040"/>
<dbReference type="Pharos" id="B7Z1M9">
    <property type="development level" value="Tdark"/>
</dbReference>
<dbReference type="PRO" id="PR:B7Z1M9"/>
<dbReference type="Proteomes" id="UP000005640">
    <property type="component" value="Chromosome 1"/>
</dbReference>
<dbReference type="RNAct" id="B7Z1M9">
    <property type="molecule type" value="protein"/>
</dbReference>
<dbReference type="Bgee" id="ENSG00000225556">
    <property type="expression patterns" value="Expressed in skin of leg and 83 other cell types or tissues"/>
</dbReference>
<dbReference type="CDD" id="cd00030">
    <property type="entry name" value="C2"/>
    <property type="match status" value="1"/>
</dbReference>
<dbReference type="Gene3D" id="2.60.40.150">
    <property type="entry name" value="C2 domain"/>
    <property type="match status" value="1"/>
</dbReference>
<dbReference type="InterPro" id="IPR000008">
    <property type="entry name" value="C2_dom"/>
</dbReference>
<dbReference type="InterPro" id="IPR035892">
    <property type="entry name" value="C2_domain_sf"/>
</dbReference>
<dbReference type="InterPro" id="IPR043549">
    <property type="entry name" value="C2C4C/C2C4D"/>
</dbReference>
<dbReference type="PANTHER" id="PTHR46291:SF1">
    <property type="entry name" value="C2 CALCIUM-DEPENDENT DOMAIN-CONTAINING PROTEIN 4D"/>
    <property type="match status" value="1"/>
</dbReference>
<dbReference type="PANTHER" id="PTHR46291">
    <property type="entry name" value="C2 DOMAIN-CONTAINING PROTEIN"/>
    <property type="match status" value="1"/>
</dbReference>
<dbReference type="Pfam" id="PF00168">
    <property type="entry name" value="C2"/>
    <property type="match status" value="1"/>
</dbReference>
<dbReference type="SMART" id="SM00239">
    <property type="entry name" value="C2"/>
    <property type="match status" value="1"/>
</dbReference>
<dbReference type="SUPFAM" id="SSF49562">
    <property type="entry name" value="C2 domain (Calcium/lipid-binding domain, CaLB)"/>
    <property type="match status" value="1"/>
</dbReference>
<dbReference type="PROSITE" id="PS50004">
    <property type="entry name" value="C2"/>
    <property type="match status" value="1"/>
</dbReference>
<protein>
    <recommendedName>
        <fullName>C2 calcium-dependent domain-containing protein 4D</fullName>
    </recommendedName>
</protein>
<gene>
    <name type="primary">C2CD4D</name>
    <name type="synonym">FAM148D</name>
</gene>
<accession>B7Z1M9</accession>
<accession>B2RXG8</accession>
<sequence>MWLLEKAGYKVGAAEPAARWAPSGLFSKRRAPGPPTSACPNVLTPDRIPQFFIPPRLPDPGGAVPAARRHVAGRGLPATCSLPHLAGREGWAFLPESPHTRRRESLFHGPPPAPAGGLPAAQSRLHVSAPDLRLCRAPDSDTASSPDSSPFGSPRPGLGRRRVSRPHSLSPEKASSADTSPHSPRRAGPPTPPLFHLDFLCCQLRPTRESVLRLGPRGGQLRLSTEYQAGPGRLRLRLVSAEGLPRPRSRPGSGGGGCCVVLRLRPRVRPREQQSRVVKCSANPIFNEDFFFDGLGPPDLAARSLRAKVLDRGAGLRRDVLLGECETPLIALLPPLGGGLGPGSSLAPTHLSL</sequence>
<evidence type="ECO:0000255" key="1">
    <source>
        <dbReference type="PROSITE-ProRule" id="PRU00041"/>
    </source>
</evidence>
<evidence type="ECO:0000256" key="2">
    <source>
        <dbReference type="SAM" id="MobiDB-lite"/>
    </source>
</evidence>
<evidence type="ECO:0000305" key="3"/>
<reference key="1">
    <citation type="journal article" date="2004" name="Nat. Genet.">
        <title>Complete sequencing and characterization of 21,243 full-length human cDNAs.</title>
        <authorList>
            <person name="Ota T."/>
            <person name="Suzuki Y."/>
            <person name="Nishikawa T."/>
            <person name="Otsuki T."/>
            <person name="Sugiyama T."/>
            <person name="Irie R."/>
            <person name="Wakamatsu A."/>
            <person name="Hayashi K."/>
            <person name="Sato H."/>
            <person name="Nagai K."/>
            <person name="Kimura K."/>
            <person name="Makita H."/>
            <person name="Sekine M."/>
            <person name="Obayashi M."/>
            <person name="Nishi T."/>
            <person name="Shibahara T."/>
            <person name="Tanaka T."/>
            <person name="Ishii S."/>
            <person name="Yamamoto J."/>
            <person name="Saito K."/>
            <person name="Kawai Y."/>
            <person name="Isono Y."/>
            <person name="Nakamura Y."/>
            <person name="Nagahari K."/>
            <person name="Murakami K."/>
            <person name="Yasuda T."/>
            <person name="Iwayanagi T."/>
            <person name="Wagatsuma M."/>
            <person name="Shiratori A."/>
            <person name="Sudo H."/>
            <person name="Hosoiri T."/>
            <person name="Kaku Y."/>
            <person name="Kodaira H."/>
            <person name="Kondo H."/>
            <person name="Sugawara M."/>
            <person name="Takahashi M."/>
            <person name="Kanda K."/>
            <person name="Yokoi T."/>
            <person name="Furuya T."/>
            <person name="Kikkawa E."/>
            <person name="Omura Y."/>
            <person name="Abe K."/>
            <person name="Kamihara K."/>
            <person name="Katsuta N."/>
            <person name="Sato K."/>
            <person name="Tanikawa M."/>
            <person name="Yamazaki M."/>
            <person name="Ninomiya K."/>
            <person name="Ishibashi T."/>
            <person name="Yamashita H."/>
            <person name="Murakawa K."/>
            <person name="Fujimori K."/>
            <person name="Tanai H."/>
            <person name="Kimata M."/>
            <person name="Watanabe M."/>
            <person name="Hiraoka S."/>
            <person name="Chiba Y."/>
            <person name="Ishida S."/>
            <person name="Ono Y."/>
            <person name="Takiguchi S."/>
            <person name="Watanabe S."/>
            <person name="Yosida M."/>
            <person name="Hotuta T."/>
            <person name="Kusano J."/>
            <person name="Kanehori K."/>
            <person name="Takahashi-Fujii A."/>
            <person name="Hara H."/>
            <person name="Tanase T.-O."/>
            <person name="Nomura Y."/>
            <person name="Togiya S."/>
            <person name="Komai F."/>
            <person name="Hara R."/>
            <person name="Takeuchi K."/>
            <person name="Arita M."/>
            <person name="Imose N."/>
            <person name="Musashino K."/>
            <person name="Yuuki H."/>
            <person name="Oshima A."/>
            <person name="Sasaki N."/>
            <person name="Aotsuka S."/>
            <person name="Yoshikawa Y."/>
            <person name="Matsunawa H."/>
            <person name="Ichihara T."/>
            <person name="Shiohata N."/>
            <person name="Sano S."/>
            <person name="Moriya S."/>
            <person name="Momiyama H."/>
            <person name="Satoh N."/>
            <person name="Takami S."/>
            <person name="Terashima Y."/>
            <person name="Suzuki O."/>
            <person name="Nakagawa S."/>
            <person name="Senoh A."/>
            <person name="Mizoguchi H."/>
            <person name="Goto Y."/>
            <person name="Shimizu F."/>
            <person name="Wakebe H."/>
            <person name="Hishigaki H."/>
            <person name="Watanabe T."/>
            <person name="Sugiyama A."/>
            <person name="Takemoto M."/>
            <person name="Kawakami B."/>
            <person name="Yamazaki M."/>
            <person name="Watanabe K."/>
            <person name="Kumagai A."/>
            <person name="Itakura S."/>
            <person name="Fukuzumi Y."/>
            <person name="Fujimori Y."/>
            <person name="Komiyama M."/>
            <person name="Tashiro H."/>
            <person name="Tanigami A."/>
            <person name="Fujiwara T."/>
            <person name="Ono T."/>
            <person name="Yamada K."/>
            <person name="Fujii Y."/>
            <person name="Ozaki K."/>
            <person name="Hirao M."/>
            <person name="Ohmori Y."/>
            <person name="Kawabata A."/>
            <person name="Hikiji T."/>
            <person name="Kobatake N."/>
            <person name="Inagaki H."/>
            <person name="Ikema Y."/>
            <person name="Okamoto S."/>
            <person name="Okitani R."/>
            <person name="Kawakami T."/>
            <person name="Noguchi S."/>
            <person name="Itoh T."/>
            <person name="Shigeta K."/>
            <person name="Senba T."/>
            <person name="Matsumura K."/>
            <person name="Nakajima Y."/>
            <person name="Mizuno T."/>
            <person name="Morinaga M."/>
            <person name="Sasaki M."/>
            <person name="Togashi T."/>
            <person name="Oyama M."/>
            <person name="Hata H."/>
            <person name="Watanabe M."/>
            <person name="Komatsu T."/>
            <person name="Mizushima-Sugano J."/>
            <person name="Satoh T."/>
            <person name="Shirai Y."/>
            <person name="Takahashi Y."/>
            <person name="Nakagawa K."/>
            <person name="Okumura K."/>
            <person name="Nagase T."/>
            <person name="Nomura N."/>
            <person name="Kikuchi H."/>
            <person name="Masuho Y."/>
            <person name="Yamashita R."/>
            <person name="Nakai K."/>
            <person name="Yada T."/>
            <person name="Nakamura Y."/>
            <person name="Ohara O."/>
            <person name="Isogai T."/>
            <person name="Sugano S."/>
        </authorList>
    </citation>
    <scope>NUCLEOTIDE SEQUENCE [LARGE SCALE MRNA]</scope>
    <source>
        <tissue>Cerebellum</tissue>
    </source>
</reference>
<reference key="2">
    <citation type="journal article" date="2006" name="Nature">
        <title>The DNA sequence and biological annotation of human chromosome 1.</title>
        <authorList>
            <person name="Gregory S.G."/>
            <person name="Barlow K.F."/>
            <person name="McLay K.E."/>
            <person name="Kaul R."/>
            <person name="Swarbreck D."/>
            <person name="Dunham A."/>
            <person name="Scott C.E."/>
            <person name="Howe K.L."/>
            <person name="Woodfine K."/>
            <person name="Spencer C.C.A."/>
            <person name="Jones M.C."/>
            <person name="Gillson C."/>
            <person name="Searle S."/>
            <person name="Zhou Y."/>
            <person name="Kokocinski F."/>
            <person name="McDonald L."/>
            <person name="Evans R."/>
            <person name="Phillips K."/>
            <person name="Atkinson A."/>
            <person name="Cooper R."/>
            <person name="Jones C."/>
            <person name="Hall R.E."/>
            <person name="Andrews T.D."/>
            <person name="Lloyd C."/>
            <person name="Ainscough R."/>
            <person name="Almeida J.P."/>
            <person name="Ambrose K.D."/>
            <person name="Anderson F."/>
            <person name="Andrew R.W."/>
            <person name="Ashwell R.I.S."/>
            <person name="Aubin K."/>
            <person name="Babbage A.K."/>
            <person name="Bagguley C.L."/>
            <person name="Bailey J."/>
            <person name="Beasley H."/>
            <person name="Bethel G."/>
            <person name="Bird C.P."/>
            <person name="Bray-Allen S."/>
            <person name="Brown J.Y."/>
            <person name="Brown A.J."/>
            <person name="Buckley D."/>
            <person name="Burton J."/>
            <person name="Bye J."/>
            <person name="Carder C."/>
            <person name="Chapman J.C."/>
            <person name="Clark S.Y."/>
            <person name="Clarke G."/>
            <person name="Clee C."/>
            <person name="Cobley V."/>
            <person name="Collier R.E."/>
            <person name="Corby N."/>
            <person name="Coville G.J."/>
            <person name="Davies J."/>
            <person name="Deadman R."/>
            <person name="Dunn M."/>
            <person name="Earthrowl M."/>
            <person name="Ellington A.G."/>
            <person name="Errington H."/>
            <person name="Frankish A."/>
            <person name="Frankland J."/>
            <person name="French L."/>
            <person name="Garner P."/>
            <person name="Garnett J."/>
            <person name="Gay L."/>
            <person name="Ghori M.R.J."/>
            <person name="Gibson R."/>
            <person name="Gilby L.M."/>
            <person name="Gillett W."/>
            <person name="Glithero R.J."/>
            <person name="Grafham D.V."/>
            <person name="Griffiths C."/>
            <person name="Griffiths-Jones S."/>
            <person name="Grocock R."/>
            <person name="Hammond S."/>
            <person name="Harrison E.S.I."/>
            <person name="Hart E."/>
            <person name="Haugen E."/>
            <person name="Heath P.D."/>
            <person name="Holmes S."/>
            <person name="Holt K."/>
            <person name="Howden P.J."/>
            <person name="Hunt A.R."/>
            <person name="Hunt S.E."/>
            <person name="Hunter G."/>
            <person name="Isherwood J."/>
            <person name="James R."/>
            <person name="Johnson C."/>
            <person name="Johnson D."/>
            <person name="Joy A."/>
            <person name="Kay M."/>
            <person name="Kershaw J.K."/>
            <person name="Kibukawa M."/>
            <person name="Kimberley A.M."/>
            <person name="King A."/>
            <person name="Knights A.J."/>
            <person name="Lad H."/>
            <person name="Laird G."/>
            <person name="Lawlor S."/>
            <person name="Leongamornlert D.A."/>
            <person name="Lloyd D.M."/>
            <person name="Loveland J."/>
            <person name="Lovell J."/>
            <person name="Lush M.J."/>
            <person name="Lyne R."/>
            <person name="Martin S."/>
            <person name="Mashreghi-Mohammadi M."/>
            <person name="Matthews L."/>
            <person name="Matthews N.S.W."/>
            <person name="McLaren S."/>
            <person name="Milne S."/>
            <person name="Mistry S."/>
            <person name="Moore M.J.F."/>
            <person name="Nickerson T."/>
            <person name="O'Dell C.N."/>
            <person name="Oliver K."/>
            <person name="Palmeiri A."/>
            <person name="Palmer S.A."/>
            <person name="Parker A."/>
            <person name="Patel D."/>
            <person name="Pearce A.V."/>
            <person name="Peck A.I."/>
            <person name="Pelan S."/>
            <person name="Phelps K."/>
            <person name="Phillimore B.J."/>
            <person name="Plumb R."/>
            <person name="Rajan J."/>
            <person name="Raymond C."/>
            <person name="Rouse G."/>
            <person name="Saenphimmachak C."/>
            <person name="Sehra H.K."/>
            <person name="Sheridan E."/>
            <person name="Shownkeen R."/>
            <person name="Sims S."/>
            <person name="Skuce C.D."/>
            <person name="Smith M."/>
            <person name="Steward C."/>
            <person name="Subramanian S."/>
            <person name="Sycamore N."/>
            <person name="Tracey A."/>
            <person name="Tromans A."/>
            <person name="Van Helmond Z."/>
            <person name="Wall M."/>
            <person name="Wallis J.M."/>
            <person name="White S."/>
            <person name="Whitehead S.L."/>
            <person name="Wilkinson J.E."/>
            <person name="Willey D.L."/>
            <person name="Williams H."/>
            <person name="Wilming L."/>
            <person name="Wray P.W."/>
            <person name="Wu Z."/>
            <person name="Coulson A."/>
            <person name="Vaudin M."/>
            <person name="Sulston J.E."/>
            <person name="Durbin R.M."/>
            <person name="Hubbard T."/>
            <person name="Wooster R."/>
            <person name="Dunham I."/>
            <person name="Carter N.P."/>
            <person name="McVean G."/>
            <person name="Ross M.T."/>
            <person name="Harrow J."/>
            <person name="Olson M.V."/>
            <person name="Beck S."/>
            <person name="Rogers J."/>
            <person name="Bentley D.R."/>
        </authorList>
    </citation>
    <scope>NUCLEOTIDE SEQUENCE [LARGE SCALE GENOMIC DNA]</scope>
</reference>
<reference key="3">
    <citation type="journal article" date="2004" name="Genome Res.">
        <title>The status, quality, and expansion of the NIH full-length cDNA project: the Mammalian Gene Collection (MGC).</title>
        <authorList>
            <consortium name="The MGC Project Team"/>
        </authorList>
    </citation>
    <scope>NUCLEOTIDE SEQUENCE [LARGE SCALE MRNA]</scope>
    <source>
        <tissue>Brain</tissue>
    </source>
</reference>
<name>C2D4D_HUMAN</name>
<keyword id="KW-1267">Proteomics identification</keyword>
<keyword id="KW-1185">Reference proteome</keyword>
<organism>
    <name type="scientific">Homo sapiens</name>
    <name type="common">Human</name>
    <dbReference type="NCBI Taxonomy" id="9606"/>
    <lineage>
        <taxon>Eukaryota</taxon>
        <taxon>Metazoa</taxon>
        <taxon>Chordata</taxon>
        <taxon>Craniata</taxon>
        <taxon>Vertebrata</taxon>
        <taxon>Euteleostomi</taxon>
        <taxon>Mammalia</taxon>
        <taxon>Eutheria</taxon>
        <taxon>Euarchontoglires</taxon>
        <taxon>Primates</taxon>
        <taxon>Haplorrhini</taxon>
        <taxon>Catarrhini</taxon>
        <taxon>Hominidae</taxon>
        <taxon>Homo</taxon>
    </lineage>
</organism>
<proteinExistence type="evidence at protein level"/>
<feature type="chain" id="PRO_0000394960" description="C2 calcium-dependent domain-containing protein 4D">
    <location>
        <begin position="1"/>
        <end position="353"/>
    </location>
</feature>
<feature type="domain" description="C2" evidence="1">
    <location>
        <begin position="217"/>
        <end position="343"/>
    </location>
</feature>
<feature type="region of interest" description="Disordered" evidence="2">
    <location>
        <begin position="135"/>
        <end position="191"/>
    </location>
</feature>
<feature type="compositionally biased region" description="Low complexity" evidence="2">
    <location>
        <begin position="140"/>
        <end position="150"/>
    </location>
</feature>
<feature type="sequence conflict" description="In Ref. 1; BAH11565." evidence="3" ref="1">
    <original>E</original>
    <variation>G</variation>
    <location>
        <position position="288"/>
    </location>
</feature>